<protein>
    <recommendedName>
        <fullName evidence="1">Small ribosomal subunit protein uS19</fullName>
    </recommendedName>
    <alternativeName>
        <fullName evidence="2">30S ribosomal protein S19</fullName>
    </alternativeName>
</protein>
<reference key="1">
    <citation type="journal article" date="2010" name="Genome Biol. Evol.">
        <title>Continuing evolution of Burkholderia mallei through genome reduction and large-scale rearrangements.</title>
        <authorList>
            <person name="Losada L."/>
            <person name="Ronning C.M."/>
            <person name="DeShazer D."/>
            <person name="Woods D."/>
            <person name="Fedorova N."/>
            <person name="Kim H.S."/>
            <person name="Shabalina S.A."/>
            <person name="Pearson T.R."/>
            <person name="Brinkac L."/>
            <person name="Tan P."/>
            <person name="Nandi T."/>
            <person name="Crabtree J."/>
            <person name="Badger J."/>
            <person name="Beckstrom-Sternberg S."/>
            <person name="Saqib M."/>
            <person name="Schutzer S.E."/>
            <person name="Keim P."/>
            <person name="Nierman W.C."/>
        </authorList>
    </citation>
    <scope>NUCLEOTIDE SEQUENCE [LARGE SCALE GENOMIC DNA]</scope>
    <source>
        <strain>1710b</strain>
    </source>
</reference>
<organism>
    <name type="scientific">Burkholderia pseudomallei (strain 1710b)</name>
    <dbReference type="NCBI Taxonomy" id="320372"/>
    <lineage>
        <taxon>Bacteria</taxon>
        <taxon>Pseudomonadati</taxon>
        <taxon>Pseudomonadota</taxon>
        <taxon>Betaproteobacteria</taxon>
        <taxon>Burkholderiales</taxon>
        <taxon>Burkholderiaceae</taxon>
        <taxon>Burkholderia</taxon>
        <taxon>pseudomallei group</taxon>
    </lineage>
</organism>
<accession>Q3JMR7</accession>
<feature type="chain" id="PRO_0000265336" description="Small ribosomal subunit protein uS19">
    <location>
        <begin position="1"/>
        <end position="91"/>
    </location>
</feature>
<name>RS19_BURP1</name>
<comment type="function">
    <text evidence="1">Protein S19 forms a complex with S13 that binds strongly to the 16S ribosomal RNA.</text>
</comment>
<comment type="similarity">
    <text evidence="1">Belongs to the universal ribosomal protein uS19 family.</text>
</comment>
<evidence type="ECO:0000255" key="1">
    <source>
        <dbReference type="HAMAP-Rule" id="MF_00531"/>
    </source>
</evidence>
<evidence type="ECO:0000305" key="2"/>
<gene>
    <name evidence="1" type="primary">rpsS</name>
    <name type="ordered locus">BURPS1710b_3772</name>
</gene>
<proteinExistence type="inferred from homology"/>
<sequence length="91" mass="10108">MARSVKKGPFCDAHLLKKVEAAAASRDKKPIKTWSRRSTILPDFIGLTIAVHNGRQHVPVYISENMVGHKLGEFALTRTFKGHAADKKAKK</sequence>
<dbReference type="EMBL" id="CP000124">
    <property type="protein sequence ID" value="ABA48285.1"/>
    <property type="molecule type" value="Genomic_DNA"/>
</dbReference>
<dbReference type="RefSeq" id="WP_004199273.1">
    <property type="nucleotide sequence ID" value="NC_007434.1"/>
</dbReference>
<dbReference type="SMR" id="Q3JMR7"/>
<dbReference type="EnsemblBacteria" id="ABA48285">
    <property type="protein sequence ID" value="ABA48285"/>
    <property type="gene ID" value="BURPS1710b_3772"/>
</dbReference>
<dbReference type="GeneID" id="98107156"/>
<dbReference type="KEGG" id="bpm:BURPS1710b_3772"/>
<dbReference type="HOGENOM" id="CLU_144911_0_1_4"/>
<dbReference type="Proteomes" id="UP000002700">
    <property type="component" value="Chromosome I"/>
</dbReference>
<dbReference type="GO" id="GO:0005737">
    <property type="term" value="C:cytoplasm"/>
    <property type="evidence" value="ECO:0007669"/>
    <property type="project" value="UniProtKB-ARBA"/>
</dbReference>
<dbReference type="GO" id="GO:0015935">
    <property type="term" value="C:small ribosomal subunit"/>
    <property type="evidence" value="ECO:0007669"/>
    <property type="project" value="InterPro"/>
</dbReference>
<dbReference type="GO" id="GO:0019843">
    <property type="term" value="F:rRNA binding"/>
    <property type="evidence" value="ECO:0007669"/>
    <property type="project" value="UniProtKB-UniRule"/>
</dbReference>
<dbReference type="GO" id="GO:0003735">
    <property type="term" value="F:structural constituent of ribosome"/>
    <property type="evidence" value="ECO:0007669"/>
    <property type="project" value="InterPro"/>
</dbReference>
<dbReference type="GO" id="GO:0000028">
    <property type="term" value="P:ribosomal small subunit assembly"/>
    <property type="evidence" value="ECO:0007669"/>
    <property type="project" value="TreeGrafter"/>
</dbReference>
<dbReference type="GO" id="GO:0006412">
    <property type="term" value="P:translation"/>
    <property type="evidence" value="ECO:0007669"/>
    <property type="project" value="UniProtKB-UniRule"/>
</dbReference>
<dbReference type="FunFam" id="3.30.860.10:FF:000001">
    <property type="entry name" value="30S ribosomal protein S19"/>
    <property type="match status" value="1"/>
</dbReference>
<dbReference type="Gene3D" id="3.30.860.10">
    <property type="entry name" value="30s Ribosomal Protein S19, Chain A"/>
    <property type="match status" value="1"/>
</dbReference>
<dbReference type="HAMAP" id="MF_00531">
    <property type="entry name" value="Ribosomal_uS19"/>
    <property type="match status" value="1"/>
</dbReference>
<dbReference type="InterPro" id="IPR002222">
    <property type="entry name" value="Ribosomal_uS19"/>
</dbReference>
<dbReference type="InterPro" id="IPR005732">
    <property type="entry name" value="Ribosomal_uS19_bac-type"/>
</dbReference>
<dbReference type="InterPro" id="IPR020934">
    <property type="entry name" value="Ribosomal_uS19_CS"/>
</dbReference>
<dbReference type="InterPro" id="IPR023575">
    <property type="entry name" value="Ribosomal_uS19_SF"/>
</dbReference>
<dbReference type="NCBIfam" id="TIGR01050">
    <property type="entry name" value="rpsS_bact"/>
    <property type="match status" value="1"/>
</dbReference>
<dbReference type="PANTHER" id="PTHR11880">
    <property type="entry name" value="RIBOSOMAL PROTEIN S19P FAMILY MEMBER"/>
    <property type="match status" value="1"/>
</dbReference>
<dbReference type="PANTHER" id="PTHR11880:SF8">
    <property type="entry name" value="SMALL RIBOSOMAL SUBUNIT PROTEIN US19M"/>
    <property type="match status" value="1"/>
</dbReference>
<dbReference type="Pfam" id="PF00203">
    <property type="entry name" value="Ribosomal_S19"/>
    <property type="match status" value="1"/>
</dbReference>
<dbReference type="PIRSF" id="PIRSF002144">
    <property type="entry name" value="Ribosomal_S19"/>
    <property type="match status" value="1"/>
</dbReference>
<dbReference type="PRINTS" id="PR00975">
    <property type="entry name" value="RIBOSOMALS19"/>
</dbReference>
<dbReference type="SUPFAM" id="SSF54570">
    <property type="entry name" value="Ribosomal protein S19"/>
    <property type="match status" value="1"/>
</dbReference>
<dbReference type="PROSITE" id="PS00323">
    <property type="entry name" value="RIBOSOMAL_S19"/>
    <property type="match status" value="1"/>
</dbReference>
<keyword id="KW-0687">Ribonucleoprotein</keyword>
<keyword id="KW-0689">Ribosomal protein</keyword>
<keyword id="KW-0694">RNA-binding</keyword>
<keyword id="KW-0699">rRNA-binding</keyword>